<sequence length="328" mass="38192">MSEKIRVLLYYKYVSIENAEEYAAKHLEFCKSIGLKGRILIADEGINGTVSGDYETTQKYMDWVHSDERFADLWFKIDEENQQAFRKMFVRYKKEIVHLGLEDNNFDSDINPLETTGEYLNPKQFKEALLDEDTVVLDTRNDYEYDLGHFRGAIRPDIRNFRELPQWVRDNKDKFMEKRVVVYCTGGVRCEKFSGWMVREGFKDVGQLHGGIATYGKDPEVQGELWDGAMYVFDDRISVPINHVNPTVISKDYFDGTPCERYVNCANPFCNKQIFASEENEAKYVRGCSPECRAHERNRYVQENGLSRQEWAERLEAIGESLPQVANV</sequence>
<protein>
    <recommendedName>
        <fullName evidence="1">tRNA uridine(34) hydroxylase</fullName>
        <ecNumber evidence="1">1.14.-.-</ecNumber>
    </recommendedName>
    <alternativeName>
        <fullName evidence="1">tRNA hydroxylation protein O</fullName>
    </alternativeName>
</protein>
<proteinExistence type="inferred from homology"/>
<accession>P67329</accession>
<accession>Q8DYP1</accession>
<accession>Q8E498</accession>
<name>TRHO_STRA5</name>
<keyword id="KW-0560">Oxidoreductase</keyword>
<keyword id="KW-1185">Reference proteome</keyword>
<keyword id="KW-0819">tRNA processing</keyword>
<comment type="function">
    <text evidence="1">Catalyzes oxygen-dependent 5-hydroxyuridine (ho5U) modification at position 34 in tRNAs.</text>
</comment>
<comment type="catalytic activity">
    <reaction evidence="1">
        <text>uridine(34) in tRNA + AH2 + O2 = 5-hydroxyuridine(34) in tRNA + A + H2O</text>
        <dbReference type="Rhea" id="RHEA:64224"/>
        <dbReference type="Rhea" id="RHEA-COMP:11727"/>
        <dbReference type="Rhea" id="RHEA-COMP:13381"/>
        <dbReference type="ChEBI" id="CHEBI:13193"/>
        <dbReference type="ChEBI" id="CHEBI:15377"/>
        <dbReference type="ChEBI" id="CHEBI:15379"/>
        <dbReference type="ChEBI" id="CHEBI:17499"/>
        <dbReference type="ChEBI" id="CHEBI:65315"/>
        <dbReference type="ChEBI" id="CHEBI:136877"/>
    </reaction>
</comment>
<comment type="similarity">
    <text evidence="1">Belongs to the TrhO family.</text>
</comment>
<organism>
    <name type="scientific">Streptococcus agalactiae serotype V (strain ATCC BAA-611 / 2603 V/R)</name>
    <dbReference type="NCBI Taxonomy" id="208435"/>
    <lineage>
        <taxon>Bacteria</taxon>
        <taxon>Bacillati</taxon>
        <taxon>Bacillota</taxon>
        <taxon>Bacilli</taxon>
        <taxon>Lactobacillales</taxon>
        <taxon>Streptococcaceae</taxon>
        <taxon>Streptococcus</taxon>
    </lineage>
</organism>
<evidence type="ECO:0000255" key="1">
    <source>
        <dbReference type="HAMAP-Rule" id="MF_00469"/>
    </source>
</evidence>
<reference key="1">
    <citation type="journal article" date="2002" name="Proc. Natl. Acad. Sci. U.S.A.">
        <title>Complete genome sequence and comparative genomic analysis of an emerging human pathogen, serotype V Streptococcus agalactiae.</title>
        <authorList>
            <person name="Tettelin H."/>
            <person name="Masignani V."/>
            <person name="Cieslewicz M.J."/>
            <person name="Eisen J.A."/>
            <person name="Peterson S.N."/>
            <person name="Wessels M.R."/>
            <person name="Paulsen I.T."/>
            <person name="Nelson K.E."/>
            <person name="Margarit I."/>
            <person name="Read T.D."/>
            <person name="Madoff L.C."/>
            <person name="Wolf A.M."/>
            <person name="Beanan M.J."/>
            <person name="Brinkac L.M."/>
            <person name="Daugherty S.C."/>
            <person name="DeBoy R.T."/>
            <person name="Durkin A.S."/>
            <person name="Kolonay J.F."/>
            <person name="Madupu R."/>
            <person name="Lewis M.R."/>
            <person name="Radune D."/>
            <person name="Fedorova N.B."/>
            <person name="Scanlan D."/>
            <person name="Khouri H.M."/>
            <person name="Mulligan S."/>
            <person name="Carty H.A."/>
            <person name="Cline R.T."/>
            <person name="Van Aken S.E."/>
            <person name="Gill J."/>
            <person name="Scarselli M."/>
            <person name="Mora M."/>
            <person name="Iacobini E.T."/>
            <person name="Brettoni C."/>
            <person name="Galli G."/>
            <person name="Mariani M."/>
            <person name="Vegni F."/>
            <person name="Maione D."/>
            <person name="Rinaudo D."/>
            <person name="Rappuoli R."/>
            <person name="Telford J.L."/>
            <person name="Kasper D.L."/>
            <person name="Grandi G."/>
            <person name="Fraser C.M."/>
        </authorList>
    </citation>
    <scope>NUCLEOTIDE SEQUENCE [LARGE SCALE GENOMIC DNA]</scope>
    <source>
        <strain>ATCC BAA-611 / 2603 V/R</strain>
    </source>
</reference>
<gene>
    <name evidence="1" type="primary">trhO</name>
    <name type="ordered locus">SAG1434</name>
</gene>
<dbReference type="EC" id="1.14.-.-" evidence="1"/>
<dbReference type="EMBL" id="AE009948">
    <property type="protein sequence ID" value="AAN00304.1"/>
    <property type="molecule type" value="Genomic_DNA"/>
</dbReference>
<dbReference type="RefSeq" id="NP_688431.1">
    <property type="nucleotide sequence ID" value="NC_004116.1"/>
</dbReference>
<dbReference type="RefSeq" id="WP_001290916.1">
    <property type="nucleotide sequence ID" value="NC_004116.1"/>
</dbReference>
<dbReference type="SMR" id="P67329"/>
<dbReference type="STRING" id="208435.SAG1434"/>
<dbReference type="KEGG" id="sag:SAG1434"/>
<dbReference type="PATRIC" id="fig|208435.3.peg.1442"/>
<dbReference type="HOGENOM" id="CLU_038878_1_0_9"/>
<dbReference type="OrthoDB" id="9778326at2"/>
<dbReference type="Proteomes" id="UP000000821">
    <property type="component" value="Chromosome"/>
</dbReference>
<dbReference type="GO" id="GO:0016705">
    <property type="term" value="F:oxidoreductase activity, acting on paired donors, with incorporation or reduction of molecular oxygen"/>
    <property type="evidence" value="ECO:0007669"/>
    <property type="project" value="UniProtKB-UniRule"/>
</dbReference>
<dbReference type="GO" id="GO:0006400">
    <property type="term" value="P:tRNA modification"/>
    <property type="evidence" value="ECO:0007669"/>
    <property type="project" value="UniProtKB-UniRule"/>
</dbReference>
<dbReference type="CDD" id="cd01518">
    <property type="entry name" value="RHOD_YceA"/>
    <property type="match status" value="1"/>
</dbReference>
<dbReference type="Gene3D" id="3.30.70.100">
    <property type="match status" value="1"/>
</dbReference>
<dbReference type="Gene3D" id="3.40.250.10">
    <property type="entry name" value="Rhodanese-like domain"/>
    <property type="match status" value="1"/>
</dbReference>
<dbReference type="HAMAP" id="MF_00469">
    <property type="entry name" value="TrhO"/>
    <property type="match status" value="1"/>
</dbReference>
<dbReference type="InterPro" id="IPR001763">
    <property type="entry name" value="Rhodanese-like_dom"/>
</dbReference>
<dbReference type="InterPro" id="IPR036873">
    <property type="entry name" value="Rhodanese-like_dom_sf"/>
</dbReference>
<dbReference type="InterPro" id="IPR022111">
    <property type="entry name" value="Rhodanese_C"/>
</dbReference>
<dbReference type="InterPro" id="IPR020936">
    <property type="entry name" value="TrhO"/>
</dbReference>
<dbReference type="InterPro" id="IPR040503">
    <property type="entry name" value="TRHO_N"/>
</dbReference>
<dbReference type="NCBIfam" id="NF001135">
    <property type="entry name" value="PRK00142.1-3"/>
    <property type="match status" value="1"/>
</dbReference>
<dbReference type="NCBIfam" id="NF001137">
    <property type="entry name" value="PRK00142.1-5"/>
    <property type="match status" value="1"/>
</dbReference>
<dbReference type="PANTHER" id="PTHR43268:SF3">
    <property type="entry name" value="RHODANESE-LIKE DOMAIN-CONTAINING PROTEIN 7-RELATED"/>
    <property type="match status" value="1"/>
</dbReference>
<dbReference type="PANTHER" id="PTHR43268">
    <property type="entry name" value="THIOSULFATE SULFURTRANSFERASE/RHODANESE-LIKE DOMAIN-CONTAINING PROTEIN 2"/>
    <property type="match status" value="1"/>
</dbReference>
<dbReference type="Pfam" id="PF00581">
    <property type="entry name" value="Rhodanese"/>
    <property type="match status" value="1"/>
</dbReference>
<dbReference type="Pfam" id="PF12368">
    <property type="entry name" value="Rhodanese_C"/>
    <property type="match status" value="1"/>
</dbReference>
<dbReference type="Pfam" id="PF17773">
    <property type="entry name" value="UPF0176_N"/>
    <property type="match status" value="1"/>
</dbReference>
<dbReference type="SMART" id="SM00450">
    <property type="entry name" value="RHOD"/>
    <property type="match status" value="1"/>
</dbReference>
<dbReference type="SUPFAM" id="SSF52821">
    <property type="entry name" value="Rhodanese/Cell cycle control phosphatase"/>
    <property type="match status" value="1"/>
</dbReference>
<dbReference type="PROSITE" id="PS50206">
    <property type="entry name" value="RHODANESE_3"/>
    <property type="match status" value="1"/>
</dbReference>
<feature type="chain" id="PRO_0000161522" description="tRNA uridine(34) hydroxylase">
    <location>
        <begin position="1"/>
        <end position="328"/>
    </location>
</feature>
<feature type="domain" description="Rhodanese" evidence="1">
    <location>
        <begin position="130"/>
        <end position="224"/>
    </location>
</feature>
<feature type="active site" description="Cysteine persulfide intermediate" evidence="1">
    <location>
        <position position="184"/>
    </location>
</feature>